<sequence>MTVYHFVGIKGTGMSSLAQILHDMKHTVQGSDYEKRFFTQTALEKRSISILPFDKSNVKEGQVIIAGNAFPDTHEEIVAAKELNIPVHRYHHFLGDLMNQYTSVAVTGAHGKTSTTGLLAHVMQGAHPTSYLIGDGTGHGVENSKYFVFEACEYRRHFLSYNPDYAIMTNIDFDHPDYFTDINDVFSAFQEMALQVKKGIIACGDDEELQKIQAKVPVIFYGFGEDNDFQARNIQKRTDGTIFDVFVRNTYYDTFKITGYGNHSVLNALAVIALCHYENVDVEAVKHQLTTFEGVKRRFNEKPMGEQVIIDDYAHHPTEINATIEAARQKHPEREIVAVFQPHTFSRTEKFLDEFAESLSKADQVYLCDIFGSARENKGELTIEDLQKRIDGAELITDTTTDVLKKHKNGVLIFMGAGDIQKFEAAYVKEVQVAEK</sequence>
<evidence type="ECO:0000255" key="1">
    <source>
        <dbReference type="HAMAP-Rule" id="MF_00046"/>
    </source>
</evidence>
<feature type="chain" id="PRO_0000182052" description="UDP-N-acetylmuramate--L-alanine ligase">
    <location>
        <begin position="1"/>
        <end position="436"/>
    </location>
</feature>
<feature type="binding site" evidence="1">
    <location>
        <begin position="108"/>
        <end position="114"/>
    </location>
    <ligand>
        <name>ATP</name>
        <dbReference type="ChEBI" id="CHEBI:30616"/>
    </ligand>
</feature>
<comment type="function">
    <text evidence="1">Cell wall formation.</text>
</comment>
<comment type="catalytic activity">
    <reaction evidence="1">
        <text>UDP-N-acetyl-alpha-D-muramate + L-alanine + ATP = UDP-N-acetyl-alpha-D-muramoyl-L-alanine + ADP + phosphate + H(+)</text>
        <dbReference type="Rhea" id="RHEA:23372"/>
        <dbReference type="ChEBI" id="CHEBI:15378"/>
        <dbReference type="ChEBI" id="CHEBI:30616"/>
        <dbReference type="ChEBI" id="CHEBI:43474"/>
        <dbReference type="ChEBI" id="CHEBI:57972"/>
        <dbReference type="ChEBI" id="CHEBI:70757"/>
        <dbReference type="ChEBI" id="CHEBI:83898"/>
        <dbReference type="ChEBI" id="CHEBI:456216"/>
        <dbReference type="EC" id="6.3.2.8"/>
    </reaction>
</comment>
<comment type="pathway">
    <text evidence="1">Cell wall biogenesis; peptidoglycan biosynthesis.</text>
</comment>
<comment type="subcellular location">
    <subcellularLocation>
        <location evidence="1">Cytoplasm</location>
    </subcellularLocation>
</comment>
<comment type="similarity">
    <text evidence="1">Belongs to the MurCDEF family.</text>
</comment>
<accession>Q6HCJ2</accession>
<dbReference type="EC" id="6.3.2.8" evidence="1"/>
<dbReference type="EMBL" id="AE017355">
    <property type="protein sequence ID" value="AAT63653.1"/>
    <property type="molecule type" value="Genomic_DNA"/>
</dbReference>
<dbReference type="RefSeq" id="WP_000219470.1">
    <property type="nucleotide sequence ID" value="NC_005957.1"/>
</dbReference>
<dbReference type="RefSeq" id="YP_038734.1">
    <property type="nucleotide sequence ID" value="NC_005957.1"/>
</dbReference>
<dbReference type="SMR" id="Q6HCJ2"/>
<dbReference type="GeneID" id="69529911"/>
<dbReference type="KEGG" id="btk:BT9727_4420"/>
<dbReference type="PATRIC" id="fig|281309.8.peg.4708"/>
<dbReference type="HOGENOM" id="CLU_028104_1_0_9"/>
<dbReference type="UniPathway" id="UPA00219"/>
<dbReference type="Proteomes" id="UP000001301">
    <property type="component" value="Chromosome"/>
</dbReference>
<dbReference type="GO" id="GO:0005737">
    <property type="term" value="C:cytoplasm"/>
    <property type="evidence" value="ECO:0007669"/>
    <property type="project" value="UniProtKB-SubCell"/>
</dbReference>
<dbReference type="GO" id="GO:0005524">
    <property type="term" value="F:ATP binding"/>
    <property type="evidence" value="ECO:0007669"/>
    <property type="project" value="UniProtKB-UniRule"/>
</dbReference>
<dbReference type="GO" id="GO:0008763">
    <property type="term" value="F:UDP-N-acetylmuramate-L-alanine ligase activity"/>
    <property type="evidence" value="ECO:0007669"/>
    <property type="project" value="UniProtKB-UniRule"/>
</dbReference>
<dbReference type="GO" id="GO:0051301">
    <property type="term" value="P:cell division"/>
    <property type="evidence" value="ECO:0007669"/>
    <property type="project" value="UniProtKB-KW"/>
</dbReference>
<dbReference type="GO" id="GO:0071555">
    <property type="term" value="P:cell wall organization"/>
    <property type="evidence" value="ECO:0007669"/>
    <property type="project" value="UniProtKB-KW"/>
</dbReference>
<dbReference type="GO" id="GO:0009252">
    <property type="term" value="P:peptidoglycan biosynthetic process"/>
    <property type="evidence" value="ECO:0007669"/>
    <property type="project" value="UniProtKB-UniRule"/>
</dbReference>
<dbReference type="GO" id="GO:0008360">
    <property type="term" value="P:regulation of cell shape"/>
    <property type="evidence" value="ECO:0007669"/>
    <property type="project" value="UniProtKB-KW"/>
</dbReference>
<dbReference type="Gene3D" id="3.90.190.20">
    <property type="entry name" value="Mur ligase, C-terminal domain"/>
    <property type="match status" value="1"/>
</dbReference>
<dbReference type="Gene3D" id="3.40.1190.10">
    <property type="entry name" value="Mur-like, catalytic domain"/>
    <property type="match status" value="1"/>
</dbReference>
<dbReference type="Gene3D" id="3.40.50.720">
    <property type="entry name" value="NAD(P)-binding Rossmann-like Domain"/>
    <property type="match status" value="1"/>
</dbReference>
<dbReference type="HAMAP" id="MF_00046">
    <property type="entry name" value="MurC"/>
    <property type="match status" value="1"/>
</dbReference>
<dbReference type="InterPro" id="IPR036565">
    <property type="entry name" value="Mur-like_cat_sf"/>
</dbReference>
<dbReference type="InterPro" id="IPR004101">
    <property type="entry name" value="Mur_ligase_C"/>
</dbReference>
<dbReference type="InterPro" id="IPR036615">
    <property type="entry name" value="Mur_ligase_C_dom_sf"/>
</dbReference>
<dbReference type="InterPro" id="IPR013221">
    <property type="entry name" value="Mur_ligase_cen"/>
</dbReference>
<dbReference type="InterPro" id="IPR000713">
    <property type="entry name" value="Mur_ligase_N"/>
</dbReference>
<dbReference type="InterPro" id="IPR050061">
    <property type="entry name" value="MurCDEF_pg_biosynth"/>
</dbReference>
<dbReference type="InterPro" id="IPR005758">
    <property type="entry name" value="UDP-N-AcMur_Ala_ligase_MurC"/>
</dbReference>
<dbReference type="NCBIfam" id="TIGR01082">
    <property type="entry name" value="murC"/>
    <property type="match status" value="1"/>
</dbReference>
<dbReference type="PANTHER" id="PTHR43445:SF3">
    <property type="entry name" value="UDP-N-ACETYLMURAMATE--L-ALANINE LIGASE"/>
    <property type="match status" value="1"/>
</dbReference>
<dbReference type="PANTHER" id="PTHR43445">
    <property type="entry name" value="UDP-N-ACETYLMURAMATE--L-ALANINE LIGASE-RELATED"/>
    <property type="match status" value="1"/>
</dbReference>
<dbReference type="Pfam" id="PF01225">
    <property type="entry name" value="Mur_ligase"/>
    <property type="match status" value="1"/>
</dbReference>
<dbReference type="Pfam" id="PF02875">
    <property type="entry name" value="Mur_ligase_C"/>
    <property type="match status" value="1"/>
</dbReference>
<dbReference type="Pfam" id="PF08245">
    <property type="entry name" value="Mur_ligase_M"/>
    <property type="match status" value="1"/>
</dbReference>
<dbReference type="SUPFAM" id="SSF51984">
    <property type="entry name" value="MurCD N-terminal domain"/>
    <property type="match status" value="1"/>
</dbReference>
<dbReference type="SUPFAM" id="SSF53623">
    <property type="entry name" value="MurD-like peptide ligases, catalytic domain"/>
    <property type="match status" value="1"/>
</dbReference>
<dbReference type="SUPFAM" id="SSF53244">
    <property type="entry name" value="MurD-like peptide ligases, peptide-binding domain"/>
    <property type="match status" value="1"/>
</dbReference>
<protein>
    <recommendedName>
        <fullName evidence="1">UDP-N-acetylmuramate--L-alanine ligase</fullName>
        <ecNumber evidence="1">6.3.2.8</ecNumber>
    </recommendedName>
    <alternativeName>
        <fullName evidence="1">UDP-N-acetylmuramoyl-L-alanine synthetase</fullName>
    </alternativeName>
</protein>
<keyword id="KW-0067">ATP-binding</keyword>
<keyword id="KW-0131">Cell cycle</keyword>
<keyword id="KW-0132">Cell division</keyword>
<keyword id="KW-0133">Cell shape</keyword>
<keyword id="KW-0961">Cell wall biogenesis/degradation</keyword>
<keyword id="KW-0963">Cytoplasm</keyword>
<keyword id="KW-0436">Ligase</keyword>
<keyword id="KW-0547">Nucleotide-binding</keyword>
<keyword id="KW-0573">Peptidoglycan synthesis</keyword>
<reference key="1">
    <citation type="journal article" date="2006" name="J. Bacteriol.">
        <title>Pathogenomic sequence analysis of Bacillus cereus and Bacillus thuringiensis isolates closely related to Bacillus anthracis.</title>
        <authorList>
            <person name="Han C.S."/>
            <person name="Xie G."/>
            <person name="Challacombe J.F."/>
            <person name="Altherr M.R."/>
            <person name="Bhotika S.S."/>
            <person name="Bruce D."/>
            <person name="Campbell C.S."/>
            <person name="Campbell M.L."/>
            <person name="Chen J."/>
            <person name="Chertkov O."/>
            <person name="Cleland C."/>
            <person name="Dimitrijevic M."/>
            <person name="Doggett N.A."/>
            <person name="Fawcett J.J."/>
            <person name="Glavina T."/>
            <person name="Goodwin L.A."/>
            <person name="Hill K.K."/>
            <person name="Hitchcock P."/>
            <person name="Jackson P.J."/>
            <person name="Keim P."/>
            <person name="Kewalramani A.R."/>
            <person name="Longmire J."/>
            <person name="Lucas S."/>
            <person name="Malfatti S."/>
            <person name="McMurry K."/>
            <person name="Meincke L.J."/>
            <person name="Misra M."/>
            <person name="Moseman B.L."/>
            <person name="Mundt M."/>
            <person name="Munk A.C."/>
            <person name="Okinaka R.T."/>
            <person name="Parson-Quintana B."/>
            <person name="Reilly L.P."/>
            <person name="Richardson P."/>
            <person name="Robinson D.L."/>
            <person name="Rubin E."/>
            <person name="Saunders E."/>
            <person name="Tapia R."/>
            <person name="Tesmer J.G."/>
            <person name="Thayer N."/>
            <person name="Thompson L.S."/>
            <person name="Tice H."/>
            <person name="Ticknor L.O."/>
            <person name="Wills P.L."/>
            <person name="Brettin T.S."/>
            <person name="Gilna P."/>
        </authorList>
    </citation>
    <scope>NUCLEOTIDE SEQUENCE [LARGE SCALE GENOMIC DNA]</scope>
    <source>
        <strain>97-27</strain>
    </source>
</reference>
<proteinExistence type="inferred from homology"/>
<name>MURC_BACHK</name>
<organism>
    <name type="scientific">Bacillus thuringiensis subsp. konkukian (strain 97-27)</name>
    <dbReference type="NCBI Taxonomy" id="281309"/>
    <lineage>
        <taxon>Bacteria</taxon>
        <taxon>Bacillati</taxon>
        <taxon>Bacillota</taxon>
        <taxon>Bacilli</taxon>
        <taxon>Bacillales</taxon>
        <taxon>Bacillaceae</taxon>
        <taxon>Bacillus</taxon>
        <taxon>Bacillus cereus group</taxon>
    </lineage>
</organism>
<gene>
    <name evidence="1" type="primary">murC</name>
    <name type="ordered locus">BT9727_4420</name>
</gene>